<organism>
    <name type="scientific">Rattus norvegicus</name>
    <name type="common">Rat</name>
    <dbReference type="NCBI Taxonomy" id="10116"/>
    <lineage>
        <taxon>Eukaryota</taxon>
        <taxon>Metazoa</taxon>
        <taxon>Chordata</taxon>
        <taxon>Craniata</taxon>
        <taxon>Vertebrata</taxon>
        <taxon>Euteleostomi</taxon>
        <taxon>Mammalia</taxon>
        <taxon>Eutheria</taxon>
        <taxon>Euarchontoglires</taxon>
        <taxon>Glires</taxon>
        <taxon>Rodentia</taxon>
        <taxon>Myomorpha</taxon>
        <taxon>Muroidea</taxon>
        <taxon>Muridae</taxon>
        <taxon>Murinae</taxon>
        <taxon>Rattus</taxon>
    </lineage>
</organism>
<dbReference type="EMBL" id="AF136537">
    <property type="protein sequence ID" value="AAG01572.1"/>
    <property type="molecule type" value="mRNA"/>
</dbReference>
<dbReference type="EMBL" id="AF160978">
    <property type="protein sequence ID" value="AAF80402.1"/>
    <property type="molecule type" value="mRNA"/>
</dbReference>
<dbReference type="RefSeq" id="NP_445835.2">
    <property type="nucleotide sequence ID" value="NM_053383.4"/>
</dbReference>
<dbReference type="SMR" id="Q9ET61"/>
<dbReference type="FunCoup" id="Q9ET61">
    <property type="interactions" value="158"/>
</dbReference>
<dbReference type="GlyCosmos" id="Q9ET61">
    <property type="glycosylation" value="2 sites, No reported glycans"/>
</dbReference>
<dbReference type="GlyGen" id="Q9ET61">
    <property type="glycosylation" value="3 sites"/>
</dbReference>
<dbReference type="iPTMnet" id="Q9ET61"/>
<dbReference type="PhosphoSitePlus" id="Q9ET61"/>
<dbReference type="Ensembl" id="ENSRNOT00000076493.2">
    <property type="protein sequence ID" value="ENSRNOP00000089608.1"/>
    <property type="gene ID" value="ENSRNOG00000024799.7"/>
</dbReference>
<dbReference type="GeneID" id="84398"/>
<dbReference type="KEGG" id="rno:84398"/>
<dbReference type="UCSC" id="RGD:621251">
    <property type="organism name" value="rat"/>
</dbReference>
<dbReference type="AGR" id="RGD:621251"/>
<dbReference type="CTD" id="22918"/>
<dbReference type="RGD" id="621251">
    <property type="gene designation" value="Cd93"/>
</dbReference>
<dbReference type="GeneTree" id="ENSGT00940000156996"/>
<dbReference type="InParanoid" id="Q9ET61"/>
<dbReference type="OMA" id="YTNWHKE"/>
<dbReference type="OrthoDB" id="10045365at2759"/>
<dbReference type="PhylomeDB" id="Q9ET61"/>
<dbReference type="Reactome" id="R-RNO-6798695">
    <property type="pathway name" value="Neutrophil degranulation"/>
</dbReference>
<dbReference type="PRO" id="PR:Q9ET61"/>
<dbReference type="Proteomes" id="UP000002494">
    <property type="component" value="Chromosome 3"/>
</dbReference>
<dbReference type="GO" id="GO:0009986">
    <property type="term" value="C:cell surface"/>
    <property type="evidence" value="ECO:0000266"/>
    <property type="project" value="RGD"/>
</dbReference>
<dbReference type="GO" id="GO:0031410">
    <property type="term" value="C:cytoplasmic vesicle"/>
    <property type="evidence" value="ECO:0000266"/>
    <property type="project" value="RGD"/>
</dbReference>
<dbReference type="GO" id="GO:0005886">
    <property type="term" value="C:plasma membrane"/>
    <property type="evidence" value="ECO:0000266"/>
    <property type="project" value="RGD"/>
</dbReference>
<dbReference type="GO" id="GO:0005509">
    <property type="term" value="F:calcium ion binding"/>
    <property type="evidence" value="ECO:0007669"/>
    <property type="project" value="InterPro"/>
</dbReference>
<dbReference type="GO" id="GO:0030246">
    <property type="term" value="F:carbohydrate binding"/>
    <property type="evidence" value="ECO:0007669"/>
    <property type="project" value="UniProtKB-KW"/>
</dbReference>
<dbReference type="GO" id="GO:0001849">
    <property type="term" value="F:complement component C1q complex binding"/>
    <property type="evidence" value="ECO:0000266"/>
    <property type="project" value="RGD"/>
</dbReference>
<dbReference type="GO" id="GO:0038023">
    <property type="term" value="F:signaling receptor activity"/>
    <property type="evidence" value="ECO:0000266"/>
    <property type="project" value="RGD"/>
</dbReference>
<dbReference type="GO" id="GO:0001525">
    <property type="term" value="P:angiogenesis"/>
    <property type="evidence" value="ECO:0000266"/>
    <property type="project" value="RGD"/>
</dbReference>
<dbReference type="GO" id="GO:0098609">
    <property type="term" value="P:cell-cell adhesion"/>
    <property type="evidence" value="ECO:0000250"/>
    <property type="project" value="UniProtKB"/>
</dbReference>
<dbReference type="CDD" id="cd00054">
    <property type="entry name" value="EGF_CA"/>
    <property type="match status" value="2"/>
</dbReference>
<dbReference type="FunFam" id="2.10.25.10:FF:000606">
    <property type="entry name" value="Complement component C1q receptor"/>
    <property type="match status" value="1"/>
</dbReference>
<dbReference type="FunFam" id="2.10.25.10:FF:000655">
    <property type="entry name" value="Complement component C1q receptor"/>
    <property type="match status" value="1"/>
</dbReference>
<dbReference type="FunFam" id="2.10.25.10:FF:000809">
    <property type="entry name" value="Complement component C1q receptor"/>
    <property type="match status" value="1"/>
</dbReference>
<dbReference type="FunFam" id="3.10.100.10:FF:000116">
    <property type="entry name" value="Complement component C1q receptor"/>
    <property type="match status" value="1"/>
</dbReference>
<dbReference type="Gene3D" id="2.10.25.10">
    <property type="entry name" value="Laminin"/>
    <property type="match status" value="5"/>
</dbReference>
<dbReference type="Gene3D" id="3.10.100.10">
    <property type="entry name" value="Mannose-Binding Protein A, subunit A"/>
    <property type="match status" value="1"/>
</dbReference>
<dbReference type="InterPro" id="IPR001304">
    <property type="entry name" value="C-type_lectin-like"/>
</dbReference>
<dbReference type="InterPro" id="IPR016186">
    <property type="entry name" value="C-type_lectin-like/link_sf"/>
</dbReference>
<dbReference type="InterPro" id="IPR051505">
    <property type="entry name" value="C-type_lectin_domain"/>
</dbReference>
<dbReference type="InterPro" id="IPR026823">
    <property type="entry name" value="cEGF"/>
</dbReference>
<dbReference type="InterPro" id="IPR016187">
    <property type="entry name" value="CTDL_fold"/>
</dbReference>
<dbReference type="InterPro" id="IPR001881">
    <property type="entry name" value="EGF-like_Ca-bd_dom"/>
</dbReference>
<dbReference type="InterPro" id="IPR000742">
    <property type="entry name" value="EGF-like_dom"/>
</dbReference>
<dbReference type="InterPro" id="IPR000152">
    <property type="entry name" value="EGF-type_Asp/Asn_hydroxyl_site"/>
</dbReference>
<dbReference type="InterPro" id="IPR018097">
    <property type="entry name" value="EGF_Ca-bd_CS"/>
</dbReference>
<dbReference type="InterPro" id="IPR009030">
    <property type="entry name" value="Growth_fac_rcpt_cys_sf"/>
</dbReference>
<dbReference type="InterPro" id="IPR049883">
    <property type="entry name" value="NOTCH1_EGF-like"/>
</dbReference>
<dbReference type="PANTHER" id="PTHR14789:SF8">
    <property type="entry name" value="C-TYPE LECTIN DOMAIN FAMILY 14 MEMBER A PRECURSOR-RELATED"/>
    <property type="match status" value="1"/>
</dbReference>
<dbReference type="PANTHER" id="PTHR14789">
    <property type="entry name" value="CHONDROLECTIN VARIANT CHODLFDELTAE"/>
    <property type="match status" value="1"/>
</dbReference>
<dbReference type="Pfam" id="PF12662">
    <property type="entry name" value="cEGF"/>
    <property type="match status" value="1"/>
</dbReference>
<dbReference type="Pfam" id="PF07645">
    <property type="entry name" value="EGF_CA"/>
    <property type="match status" value="2"/>
</dbReference>
<dbReference type="Pfam" id="PF00059">
    <property type="entry name" value="Lectin_C"/>
    <property type="match status" value="1"/>
</dbReference>
<dbReference type="SMART" id="SM00034">
    <property type="entry name" value="CLECT"/>
    <property type="match status" value="1"/>
</dbReference>
<dbReference type="SMART" id="SM00181">
    <property type="entry name" value="EGF"/>
    <property type="match status" value="5"/>
</dbReference>
<dbReference type="SMART" id="SM00179">
    <property type="entry name" value="EGF_CA"/>
    <property type="match status" value="5"/>
</dbReference>
<dbReference type="SUPFAM" id="SSF56436">
    <property type="entry name" value="C-type lectin-like"/>
    <property type="match status" value="1"/>
</dbReference>
<dbReference type="SUPFAM" id="SSF57196">
    <property type="entry name" value="EGF/Laminin"/>
    <property type="match status" value="2"/>
</dbReference>
<dbReference type="SUPFAM" id="SSF57184">
    <property type="entry name" value="Growth factor receptor domain"/>
    <property type="match status" value="1"/>
</dbReference>
<dbReference type="PROSITE" id="PS00010">
    <property type="entry name" value="ASX_HYDROXYL"/>
    <property type="match status" value="3"/>
</dbReference>
<dbReference type="PROSITE" id="PS50041">
    <property type="entry name" value="C_TYPE_LECTIN_2"/>
    <property type="match status" value="1"/>
</dbReference>
<dbReference type="PROSITE" id="PS01186">
    <property type="entry name" value="EGF_2"/>
    <property type="match status" value="3"/>
</dbReference>
<dbReference type="PROSITE" id="PS50026">
    <property type="entry name" value="EGF_3"/>
    <property type="match status" value="4"/>
</dbReference>
<dbReference type="PROSITE" id="PS01187">
    <property type="entry name" value="EGF_CA"/>
    <property type="match status" value="3"/>
</dbReference>
<protein>
    <recommendedName>
        <fullName>Complement component C1q receptor</fullName>
    </recommendedName>
    <alternativeName>
        <fullName>C1q/MBL/SPA receptor</fullName>
        <shortName>C1qR(p)</shortName>
        <shortName>C1qRp</shortName>
    </alternativeName>
    <alternativeName>
        <fullName>Cell surface antigen AA4</fullName>
    </alternativeName>
    <alternativeName>
        <fullName>Complement component 1 q subcomponent receptor 1</fullName>
    </alternativeName>
    <cdAntigenName>CD93</cdAntigenName>
</protein>
<sequence length="643" mass="68782">MVTSTGLLLLLGLLGQLWAGAAADSEAVVCEGTACYTAHWGKLSAAEAQHRCNENGGNLATVKSEEEARHVQEALAQLLKTKAPSETKIGKFWIGLQREKGKCTYHDLPMKGFSWVGGGEDTTYSNWYKASKSSCISKRCVSLILDLSLKPHPSHLPKWHESPCGTPDAPGNSIEGFLCKFNFKGMCSPLALGGPGQLTYTTPFQATTSSLKAVPFASVANVVCGDEAESKTNYYLCKETTAGVFHWGSSGPLCVSPKFGCSFNNGGCQQDCFEGGDGSFRCGCRPGFRLLDDLVTCASRNPCSSNPCTGGGMCHSVPLSENYTCHCPRGYQLDSSQVHCVDIDECEDSPCDQECINTPGGFHCECWVGYQSSGSKEEACEDVDECTAAYSPCAQGCTNTDGSFYCSCKEGYIMSGEDSTQCEDIDECLGNPCDTLCINTDGSFRCGCPAGFELAPNGVSCTRGSMFSELPARPPQKEDKGDGKESTVPLTEMPGSLNGSKDVSNRAQTTDLSIQSDSSTASVPLEIEVSSEASDVWLDLGTYLPTTSGHSQPTHEDSVPAHSDSDTDGQKLLLFYILGTVVAISLLLALALGLLIYLKRKAKKEEIKEKKAQNAADSYSWIPERAESRAPENQYSPTPGTDC</sequence>
<reference key="1">
    <citation type="journal article" date="2000" name="Eur. J. Immunol.">
        <title>Characterization and molecular cloning of rat C1qRp, a receptor on NK cells.</title>
        <authorList>
            <person name="Lovik G."/>
            <person name="Vaage J.T."/>
            <person name="Dissen E."/>
            <person name="Szpirer C."/>
            <person name="Ryan J.C."/>
            <person name="Rolstad B."/>
        </authorList>
    </citation>
    <scope>NUCLEOTIDE SEQUENCE [MRNA]</scope>
    <source>
        <strain>PVG</strain>
        <tissue>Natural killer cell</tissue>
    </source>
</reference>
<reference key="2">
    <citation type="journal article" date="2000" name="J. Biol. Chem.">
        <title>Molecular and cellular properties of the rat AA4 antigen, a C-type lectin-like receptor with structural homology to thrombomodulin.</title>
        <authorList>
            <person name="Dean Y.D."/>
            <person name="McGreal E.P."/>
            <person name="Akatsu H."/>
            <person name="Gasque P."/>
        </authorList>
    </citation>
    <scope>NUCLEOTIDE SEQUENCE [MRNA]</scope>
    <source>
        <strain>Wistar</strain>
        <tissue>Lung</tissue>
    </source>
</reference>
<reference key="3">
    <citation type="journal article" date="2012" name="Nat. Commun.">
        <title>Quantitative maps of protein phosphorylation sites across 14 different rat organs and tissues.</title>
        <authorList>
            <person name="Lundby A."/>
            <person name="Secher A."/>
            <person name="Lage K."/>
            <person name="Nordsborg N.B."/>
            <person name="Dmytriyev A."/>
            <person name="Lundby C."/>
            <person name="Olsen J.V."/>
        </authorList>
    </citation>
    <scope>PHOSPHORYLATION [LARGE SCALE ANALYSIS] AT SER-618</scope>
    <scope>IDENTIFICATION BY MASS SPECTROMETRY [LARGE SCALE ANALYSIS]</scope>
</reference>
<name>C1QR1_RAT</name>
<feature type="signal peptide" evidence="4">
    <location>
        <begin position="1"/>
        <end position="23"/>
    </location>
</feature>
<feature type="chain" id="PRO_0000017369" description="Complement component C1q receptor">
    <location>
        <begin position="24"/>
        <end position="643"/>
    </location>
</feature>
<feature type="topological domain" description="Extracellular" evidence="4">
    <location>
        <begin position="24"/>
        <end position="571"/>
    </location>
</feature>
<feature type="transmembrane region" description="Helical" evidence="4">
    <location>
        <begin position="572"/>
        <end position="592"/>
    </location>
</feature>
<feature type="topological domain" description="Cytoplasmic" evidence="4">
    <location>
        <begin position="593"/>
        <end position="643"/>
    </location>
</feature>
<feature type="domain" description="C-type lectin" evidence="5">
    <location>
        <begin position="31"/>
        <end position="173"/>
    </location>
</feature>
<feature type="domain" description="EGF-like 1" evidence="6">
    <location>
        <begin position="257"/>
        <end position="298"/>
    </location>
</feature>
<feature type="domain" description="EGF-like 2" evidence="6">
    <location>
        <begin position="299"/>
        <end position="341"/>
    </location>
</feature>
<feature type="domain" description="EGF-like 3; calcium-binding" evidence="6">
    <location>
        <begin position="342"/>
        <end position="381"/>
    </location>
</feature>
<feature type="domain" description="EGF-like 4; calcium-binding" evidence="6">
    <location>
        <begin position="382"/>
        <end position="423"/>
    </location>
</feature>
<feature type="domain" description="EGF-like 5; calcium-binding" evidence="6">
    <location>
        <begin position="424"/>
        <end position="462"/>
    </location>
</feature>
<feature type="region of interest" description="Disordered" evidence="7">
    <location>
        <begin position="469"/>
        <end position="517"/>
    </location>
</feature>
<feature type="region of interest" description="Disordered" evidence="7">
    <location>
        <begin position="606"/>
        <end position="643"/>
    </location>
</feature>
<feature type="compositionally biased region" description="Basic and acidic residues" evidence="7">
    <location>
        <begin position="475"/>
        <end position="485"/>
    </location>
</feature>
<feature type="compositionally biased region" description="Polar residues" evidence="7">
    <location>
        <begin position="497"/>
        <end position="517"/>
    </location>
</feature>
<feature type="compositionally biased region" description="Polar residues" evidence="7">
    <location>
        <begin position="631"/>
        <end position="643"/>
    </location>
</feature>
<feature type="modified residue" description="Phosphoserine" evidence="9">
    <location>
        <position position="618"/>
    </location>
</feature>
<feature type="modified residue" description="Phosphotyrosine" evidence="3">
    <location>
        <position position="619"/>
    </location>
</feature>
<feature type="modified residue" description="Phosphotyrosine" evidence="2">
    <location>
        <position position="635"/>
    </location>
</feature>
<feature type="glycosylation site" description="N-linked (GlcNAc...) asparagine" evidence="4">
    <location>
        <position position="322"/>
    </location>
</feature>
<feature type="glycosylation site" description="N-linked (GlcNAc...) asparagine" evidence="4">
    <location>
        <position position="498"/>
    </location>
</feature>
<feature type="disulfide bond" evidence="1">
    <location>
        <begin position="140"/>
        <end position="164"/>
    </location>
</feature>
<feature type="disulfide bond" evidence="1">
    <location>
        <begin position="261"/>
        <end position="272"/>
    </location>
</feature>
<feature type="disulfide bond" evidence="1">
    <location>
        <begin position="268"/>
        <end position="282"/>
    </location>
</feature>
<feature type="disulfide bond" evidence="1">
    <location>
        <begin position="284"/>
        <end position="297"/>
    </location>
</feature>
<feature type="disulfide bond" evidence="1">
    <location>
        <begin position="303"/>
        <end position="314"/>
    </location>
</feature>
<feature type="disulfide bond" evidence="1">
    <location>
        <begin position="308"/>
        <end position="325"/>
    </location>
</feature>
<feature type="disulfide bond" evidence="1">
    <location>
        <begin position="327"/>
        <end position="340"/>
    </location>
</feature>
<feature type="disulfide bond" evidence="1">
    <location>
        <begin position="346"/>
        <end position="355"/>
    </location>
</feature>
<feature type="disulfide bond" evidence="1">
    <location>
        <begin position="351"/>
        <end position="364"/>
    </location>
</feature>
<feature type="disulfide bond" evidence="1">
    <location>
        <begin position="366"/>
        <end position="380"/>
    </location>
</feature>
<feature type="disulfide bond" evidence="1">
    <location>
        <begin position="386"/>
        <end position="397"/>
    </location>
</feature>
<feature type="disulfide bond" evidence="1">
    <location>
        <begin position="393"/>
        <end position="406"/>
    </location>
</feature>
<feature type="disulfide bond" evidence="1">
    <location>
        <begin position="408"/>
        <end position="422"/>
    </location>
</feature>
<feature type="disulfide bond" evidence="1">
    <location>
        <begin position="428"/>
        <end position="437"/>
    </location>
</feature>
<feature type="disulfide bond" evidence="1">
    <location>
        <begin position="433"/>
        <end position="446"/>
    </location>
</feature>
<feature type="disulfide bond" evidence="1">
    <location>
        <begin position="448"/>
        <end position="461"/>
    </location>
</feature>
<feature type="sequence conflict" description="In Ref. 2; AAF80402." evidence="8" ref="2">
    <original>E</original>
    <variation>K</variation>
    <location>
        <position position="417"/>
    </location>
</feature>
<gene>
    <name type="primary">Cd93</name>
    <name type="synonym">C1qr1</name>
    <name type="synonym">C1qrp</name>
</gene>
<accession>Q9ET61</accession>
<accession>Q9JIZ6</accession>
<keyword id="KW-0130">Cell adhesion</keyword>
<keyword id="KW-1003">Cell membrane</keyword>
<keyword id="KW-1015">Disulfide bond</keyword>
<keyword id="KW-0245">EGF-like domain</keyword>
<keyword id="KW-0325">Glycoprotein</keyword>
<keyword id="KW-0430">Lectin</keyword>
<keyword id="KW-0472">Membrane</keyword>
<keyword id="KW-0597">Phosphoprotein</keyword>
<keyword id="KW-0675">Receptor</keyword>
<keyword id="KW-1185">Reference proteome</keyword>
<keyword id="KW-0677">Repeat</keyword>
<keyword id="KW-0732">Signal</keyword>
<keyword id="KW-0812">Transmembrane</keyword>
<keyword id="KW-1133">Transmembrane helix</keyword>
<comment type="function">
    <text evidence="2 3">Cell surface receptor that plays a role in various physiological processes including inflammation, phagocytosis, and cell adhesion. Plays a role in phagocytosis and enhances the uptake of apoptotic cells and immune complexes by acting as a receptor for defense collagens including surfactant protein A/SFTPA1, C1q, and mannose-binding lectin (MBL2). Plays a role in the regulation of endothelial cell function and adhesion by activating angiogenesis. Mechanistically, exerts its angiogenic function by associating with beta-dystroglycan, leading to SRC-dependent phosphorylation and subsequent recruitment of CBL. In turn, CBL provides a docking site for downstream signaling components, such as CRKL to enhance cell migration. Participates in angiogenesis also by acting as a receptor for the ECM pan-endothelial glycoprotein multimerin-2/MMRN2 and IGFBP7 ligands. Both ligands play a non-redundant role in CD93-mediated endothelial cell function (By similarity). Acts as a key regulator of endothelial barrier function through modulating VEGFR2 function (By similarity).</text>
</comment>
<comment type="subunit">
    <text evidence="2 3">Homodimer. Interacts with C1QBP; the association may represent a cell surface C1q receptor. Interacts with surfactant protein A/SFTPA1. Interacts with multimerin-2/MMRN2. Interacts with DAG1; this interaction plays an important role in endothelial cell migration. Interacts with CBL. Interacts with IGFBP7 (By similarity). Interacts with VEGFR2 (By similarity).</text>
</comment>
<comment type="subcellular location">
    <subcellularLocation>
        <location evidence="3">Cell membrane</location>
        <topology evidence="3">Single-pass type I membrane protein</topology>
    </subcellularLocation>
</comment>
<comment type="tissue specificity">
    <text>Widely expressed. Highly expressed in lung and heart. Expressed at lower level in brain, thymus, liver, spleen, intestine, kidney, adrenal gland, muscle and testis. Expressed on endothelial cells, platelets, undifferentiated monocytes and circulating natural killer cells.</text>
</comment>
<comment type="PTM">
    <text evidence="3">N- and O-glycosylated.</text>
</comment>
<comment type="PTM">
    <text evidence="3">Phosphorylated on Tyr-619 and Tyr-635 by SRC; these phosphorylations promote endothelial cell adhesion and migration.</text>
</comment>
<evidence type="ECO:0000250" key="1"/>
<evidence type="ECO:0000250" key="2">
    <source>
        <dbReference type="UniProtKB" id="O89103"/>
    </source>
</evidence>
<evidence type="ECO:0000250" key="3">
    <source>
        <dbReference type="UniProtKB" id="Q9NPY3"/>
    </source>
</evidence>
<evidence type="ECO:0000255" key="4"/>
<evidence type="ECO:0000255" key="5">
    <source>
        <dbReference type="PROSITE-ProRule" id="PRU00040"/>
    </source>
</evidence>
<evidence type="ECO:0000255" key="6">
    <source>
        <dbReference type="PROSITE-ProRule" id="PRU00076"/>
    </source>
</evidence>
<evidence type="ECO:0000256" key="7">
    <source>
        <dbReference type="SAM" id="MobiDB-lite"/>
    </source>
</evidence>
<evidence type="ECO:0000305" key="8"/>
<evidence type="ECO:0007744" key="9">
    <source>
    </source>
</evidence>
<proteinExistence type="evidence at protein level"/>